<dbReference type="EC" id="3.2.1.8"/>
<dbReference type="EMBL" id="X15429">
    <property type="protein sequence ID" value="CAA33469.1"/>
    <property type="molecule type" value="Genomic_DNA"/>
</dbReference>
<dbReference type="EMBL" id="CP000934">
    <property type="protein sequence ID" value="ACE85439.1"/>
    <property type="molecule type" value="Genomic_DNA"/>
</dbReference>
<dbReference type="PIR" id="S06047">
    <property type="entry name" value="S06047"/>
</dbReference>
<dbReference type="PDB" id="1CLX">
    <property type="method" value="X-ray"/>
    <property type="resolution" value="1.80 A"/>
    <property type="chains" value="A/B/C/D=265-611"/>
</dbReference>
<dbReference type="PDB" id="1E5N">
    <property type="method" value="X-ray"/>
    <property type="resolution" value="3.20 A"/>
    <property type="chains" value="A/B=264-611"/>
</dbReference>
<dbReference type="PDB" id="1E8R">
    <property type="method" value="NMR"/>
    <property type="chains" value="A=180-228"/>
</dbReference>
<dbReference type="PDB" id="1QLD">
    <property type="method" value="NMR"/>
    <property type="chains" value="A=180-228"/>
</dbReference>
<dbReference type="PDB" id="1W2P">
    <property type="method" value="X-ray"/>
    <property type="resolution" value="1.45 A"/>
    <property type="chains" value="A/B=265-611"/>
</dbReference>
<dbReference type="PDB" id="1W2V">
    <property type="method" value="X-ray"/>
    <property type="resolution" value="1.55 A"/>
    <property type="chains" value="A/B=265-611"/>
</dbReference>
<dbReference type="PDB" id="1W32">
    <property type="method" value="X-ray"/>
    <property type="resolution" value="1.20 A"/>
    <property type="chains" value="A/B=265-611"/>
</dbReference>
<dbReference type="PDB" id="1W3H">
    <property type="method" value="X-ray"/>
    <property type="resolution" value="1.50 A"/>
    <property type="chains" value="A/B=265-611"/>
</dbReference>
<dbReference type="PDB" id="1XYS">
    <property type="method" value="X-ray"/>
    <property type="resolution" value="2.50 A"/>
    <property type="chains" value="A/B=265-611"/>
</dbReference>
<dbReference type="PDBsum" id="1CLX"/>
<dbReference type="PDBsum" id="1E5N"/>
<dbReference type="PDBsum" id="1E8R"/>
<dbReference type="PDBsum" id="1QLD"/>
<dbReference type="PDBsum" id="1W2P"/>
<dbReference type="PDBsum" id="1W2V"/>
<dbReference type="PDBsum" id="1W32"/>
<dbReference type="PDBsum" id="1W3H"/>
<dbReference type="PDBsum" id="1XYS"/>
<dbReference type="SMR" id="P14768"/>
<dbReference type="STRING" id="498211.CJA_2471"/>
<dbReference type="CAZy" id="CBM10">
    <property type="family name" value="Carbohydrate-Binding Module Family 10"/>
</dbReference>
<dbReference type="CAZy" id="CBM2">
    <property type="family name" value="Carbohydrate-Binding Module Family 2"/>
</dbReference>
<dbReference type="CAZy" id="GH10">
    <property type="family name" value="Glycoside Hydrolase Family 10"/>
</dbReference>
<dbReference type="KEGG" id="cja:CJA_2471"/>
<dbReference type="eggNOG" id="COG3693">
    <property type="taxonomic scope" value="Bacteria"/>
</dbReference>
<dbReference type="HOGENOM" id="CLU_029617_0_0_6"/>
<dbReference type="UniPathway" id="UPA00114"/>
<dbReference type="EvolutionaryTrace" id="P14768"/>
<dbReference type="Proteomes" id="UP000001036">
    <property type="component" value="Chromosome"/>
</dbReference>
<dbReference type="GO" id="GO:0030248">
    <property type="term" value="F:cellulose binding"/>
    <property type="evidence" value="ECO:0007669"/>
    <property type="project" value="InterPro"/>
</dbReference>
<dbReference type="GO" id="GO:0031176">
    <property type="term" value="F:endo-1,4-beta-xylanase activity"/>
    <property type="evidence" value="ECO:0007669"/>
    <property type="project" value="UniProtKB-EC"/>
</dbReference>
<dbReference type="GO" id="GO:0045493">
    <property type="term" value="P:xylan catabolic process"/>
    <property type="evidence" value="ECO:0007669"/>
    <property type="project" value="UniProtKB-UniPathway"/>
</dbReference>
<dbReference type="Gene3D" id="2.60.40.290">
    <property type="match status" value="1"/>
</dbReference>
<dbReference type="Gene3D" id="2.30.32.30">
    <property type="entry name" value="CBM10"/>
    <property type="match status" value="1"/>
</dbReference>
<dbReference type="Gene3D" id="3.20.20.80">
    <property type="entry name" value="Glycosidases"/>
    <property type="match status" value="1"/>
</dbReference>
<dbReference type="InterPro" id="IPR001919">
    <property type="entry name" value="CBD2"/>
</dbReference>
<dbReference type="InterPro" id="IPR009031">
    <property type="entry name" value="CBM10"/>
</dbReference>
<dbReference type="InterPro" id="IPR002883">
    <property type="entry name" value="CBM10/Dockerin_dom"/>
</dbReference>
<dbReference type="InterPro" id="IPR036601">
    <property type="entry name" value="CBM10_sf"/>
</dbReference>
<dbReference type="InterPro" id="IPR008965">
    <property type="entry name" value="CBM2/CBM3_carb-bd_dom_sf"/>
</dbReference>
<dbReference type="InterPro" id="IPR012291">
    <property type="entry name" value="CBM2_carb-bd_dom_sf"/>
</dbReference>
<dbReference type="InterPro" id="IPR018366">
    <property type="entry name" value="CBM2_CS"/>
</dbReference>
<dbReference type="InterPro" id="IPR044846">
    <property type="entry name" value="GH10"/>
</dbReference>
<dbReference type="InterPro" id="IPR031158">
    <property type="entry name" value="GH10_AS"/>
</dbReference>
<dbReference type="InterPro" id="IPR001000">
    <property type="entry name" value="GH10_dom"/>
</dbReference>
<dbReference type="InterPro" id="IPR017853">
    <property type="entry name" value="Glycoside_hydrolase_SF"/>
</dbReference>
<dbReference type="PANTHER" id="PTHR31490:SF88">
    <property type="entry name" value="BETA-XYLANASE"/>
    <property type="match status" value="1"/>
</dbReference>
<dbReference type="PANTHER" id="PTHR31490">
    <property type="entry name" value="GLYCOSYL HYDROLASE"/>
    <property type="match status" value="1"/>
</dbReference>
<dbReference type="Pfam" id="PF02013">
    <property type="entry name" value="CBM_10"/>
    <property type="match status" value="1"/>
</dbReference>
<dbReference type="Pfam" id="PF00553">
    <property type="entry name" value="CBM_2"/>
    <property type="match status" value="1"/>
</dbReference>
<dbReference type="Pfam" id="PF00331">
    <property type="entry name" value="Glyco_hydro_10"/>
    <property type="match status" value="1"/>
</dbReference>
<dbReference type="PRINTS" id="PR00134">
    <property type="entry name" value="GLHYDRLASE10"/>
</dbReference>
<dbReference type="SMART" id="SM00637">
    <property type="entry name" value="CBD_II"/>
    <property type="match status" value="1"/>
</dbReference>
<dbReference type="SMART" id="SM01064">
    <property type="entry name" value="CBM_10"/>
    <property type="match status" value="1"/>
</dbReference>
<dbReference type="SMART" id="SM00633">
    <property type="entry name" value="Glyco_10"/>
    <property type="match status" value="1"/>
</dbReference>
<dbReference type="SUPFAM" id="SSF51445">
    <property type="entry name" value="(Trans)glycosidases"/>
    <property type="match status" value="1"/>
</dbReference>
<dbReference type="SUPFAM" id="SSF49384">
    <property type="entry name" value="Carbohydrate-binding domain"/>
    <property type="match status" value="1"/>
</dbReference>
<dbReference type="SUPFAM" id="SSF57615">
    <property type="entry name" value="Type X cellulose binding domain, CBDX"/>
    <property type="match status" value="1"/>
</dbReference>
<dbReference type="PROSITE" id="PS51763">
    <property type="entry name" value="CBM10"/>
    <property type="match status" value="1"/>
</dbReference>
<dbReference type="PROSITE" id="PS51173">
    <property type="entry name" value="CBM2"/>
    <property type="match status" value="1"/>
</dbReference>
<dbReference type="PROSITE" id="PS00561">
    <property type="entry name" value="CBM2_A"/>
    <property type="match status" value="1"/>
</dbReference>
<dbReference type="PROSITE" id="PS00591">
    <property type="entry name" value="GH10_1"/>
    <property type="match status" value="1"/>
</dbReference>
<dbReference type="PROSITE" id="PS51760">
    <property type="entry name" value="GH10_2"/>
    <property type="match status" value="1"/>
</dbReference>
<proteinExistence type="evidence at protein level"/>
<protein>
    <recommendedName>
        <fullName>Endo-1,4-beta-xylanase A</fullName>
        <shortName>Xylanase A</shortName>
        <ecNumber>3.2.1.8</ecNumber>
    </recommendedName>
    <alternativeName>
        <fullName>1,4-beta-D-xylan xylanohydrolase A</fullName>
        <shortName>XYLA</shortName>
    </alternativeName>
</protein>
<reference key="1">
    <citation type="journal article" date="1989" name="Mol. Microbiol.">
        <title>Conserved serine-rich sequences in xylanase and cellulase from Pseudomonas fluorescens subspecies cellulosa: internal signal sequence and unusual protein processing.</title>
        <authorList>
            <person name="Hall J."/>
            <person name="Hazlewood G.P."/>
            <person name="Huskisson N.S."/>
            <person name="Durrant A.J."/>
            <person name="Gilbert H.J."/>
        </authorList>
    </citation>
    <scope>NUCLEOTIDE SEQUENCE [GENOMIC DNA]</scope>
    <scope>PARTIAL PROTEIN SEQUENCE</scope>
</reference>
<reference key="2">
    <citation type="journal article" date="2008" name="J. Bacteriol.">
        <title>Insights into plant cell wall degradation from the genome sequence of the soil bacterium Cellvibrio japonicus.</title>
        <authorList>
            <person name="DeBoy R.T."/>
            <person name="Mongodin E.F."/>
            <person name="Fouts D.E."/>
            <person name="Tailford L.E."/>
            <person name="Khouri H."/>
            <person name="Emerson J.B."/>
            <person name="Mohamoud Y."/>
            <person name="Watkins K."/>
            <person name="Henrissat B."/>
            <person name="Gilbert H.J."/>
            <person name="Nelson K.E."/>
        </authorList>
    </citation>
    <scope>NUCLEOTIDE SEQUENCE [LARGE SCALE GENOMIC DNA]</scope>
    <source>
        <strain>Ueda107</strain>
    </source>
</reference>
<reference key="3">
    <citation type="journal article" date="1994" name="Structure">
        <title>Structure of the catalytic core of the family F xylanase from Pseudomonas fluorescens and identification of the xylopentaose-binding sites.</title>
        <authorList>
            <person name="Harris G.W."/>
            <person name="Jenkins J.A."/>
            <person name="Connerton I."/>
            <person name="Cummings N."/>
            <person name="Lo Leggio L."/>
            <person name="Scott M."/>
            <person name="Hazlewood G.P."/>
            <person name="Laurie J.I."/>
            <person name="Gilbert H.J."/>
            <person name="Pickersgill R.W."/>
        </authorList>
    </citation>
    <scope>X-RAY CRYSTALLOGRAPHY (2.5 ANGSTROMS) OF 265-611</scope>
    <scope>SEQUENCE REVISION</scope>
</reference>
<reference key="4">
    <citation type="journal article" date="1996" name="Acta Crystallogr. D">
        <title>Refined crystal structure of the catalytic domain of xylanase A from Pseudomonas fluorescens at 1.8-A resolution.</title>
        <authorList>
            <person name="Harris G.W."/>
            <person name="Jenkins J.A."/>
            <person name="Connerton I."/>
            <person name="Pickersgill R.W."/>
        </authorList>
    </citation>
    <scope>X-RAY CRYSTALLOGRAPHY (1.8 ANGSTROMS) OF 265-611</scope>
</reference>
<reference key="5">
    <citation type="journal article" date="2000" name="Biochemistry">
        <title>Solution structure of the CBM10 cellulose binding module from Pseudomonas xylanase A.</title>
        <authorList>
            <person name="Raghothama S."/>
            <person name="Simpson P.J."/>
            <person name="Szabo L."/>
            <person name="Nagy T."/>
            <person name="Gilbert H.J."/>
            <person name="Williamson M.P."/>
        </authorList>
    </citation>
    <scope>STRUCTURE BY NMR OF 180-228</scope>
    <scope>DISULFIDE BONDS</scope>
</reference>
<organism>
    <name type="scientific">Cellvibrio japonicus (strain Ueda107)</name>
    <name type="common">Pseudomonas fluorescens subsp. cellulosa</name>
    <dbReference type="NCBI Taxonomy" id="498211"/>
    <lineage>
        <taxon>Bacteria</taxon>
        <taxon>Pseudomonadati</taxon>
        <taxon>Pseudomonadota</taxon>
        <taxon>Gammaproteobacteria</taxon>
        <taxon>Cellvibrionales</taxon>
        <taxon>Cellvibrionaceae</taxon>
        <taxon>Cellvibrio</taxon>
    </lineage>
</organism>
<feature type="signal peptide">
    <location>
        <begin position="1"/>
        <end position="26"/>
    </location>
</feature>
<feature type="chain" id="PRO_0000007977" description="Endo-1,4-beta-xylanase A">
    <location>
        <begin position="27"/>
        <end position="611"/>
    </location>
</feature>
<feature type="domain" description="CBM2" evidence="4">
    <location>
        <begin position="27"/>
        <end position="128"/>
    </location>
</feature>
<feature type="domain" description="CBM10" evidence="3">
    <location>
        <begin position="183"/>
        <end position="212"/>
    </location>
</feature>
<feature type="domain" description="GH10" evidence="2">
    <location>
        <begin position="281"/>
        <end position="607"/>
    </location>
</feature>
<feature type="active site" description="Proton donor">
    <location>
        <position position="391"/>
    </location>
</feature>
<feature type="active site" description="Nucleophile">
    <location>
        <position position="510"/>
    </location>
</feature>
<feature type="disulfide bond" evidence="1">
    <location>
        <begin position="31"/>
        <end position="125"/>
    </location>
</feature>
<feature type="disulfide bond" evidence="5">
    <location>
        <begin position="184"/>
        <end position="215"/>
    </location>
</feature>
<feature type="disulfide bond" evidence="5">
    <location>
        <begin position="194"/>
        <end position="209"/>
    </location>
</feature>
<feature type="sequence conflict" description="In Ref. 1; CAA33469." evidence="6" ref="1">
    <original>RA</original>
    <variation>PR</variation>
    <location>
        <begin position="432"/>
        <end position="433"/>
    </location>
</feature>
<feature type="strand" evidence="8">
    <location>
        <begin position="183"/>
        <end position="186"/>
    </location>
</feature>
<feature type="strand" evidence="8">
    <location>
        <begin position="189"/>
        <end position="193"/>
    </location>
</feature>
<feature type="strand" evidence="8">
    <location>
        <begin position="199"/>
        <end position="204"/>
    </location>
</feature>
<feature type="strand" evidence="8">
    <location>
        <begin position="207"/>
        <end position="210"/>
    </location>
</feature>
<feature type="helix" evidence="8">
    <location>
        <begin position="212"/>
        <end position="215"/>
    </location>
</feature>
<feature type="helix" evidence="10">
    <location>
        <begin position="266"/>
        <end position="269"/>
    </location>
</feature>
<feature type="strand" evidence="10">
    <location>
        <begin position="274"/>
        <end position="279"/>
    </location>
</feature>
<feature type="strand" evidence="10">
    <location>
        <begin position="281"/>
        <end position="283"/>
    </location>
</feature>
<feature type="turn" evidence="10">
    <location>
        <begin position="287"/>
        <end position="289"/>
    </location>
</feature>
<feature type="helix" evidence="10">
    <location>
        <begin position="291"/>
        <end position="300"/>
    </location>
</feature>
<feature type="strand" evidence="10">
    <location>
        <begin position="302"/>
        <end position="308"/>
    </location>
</feature>
<feature type="helix" evidence="10">
    <location>
        <begin position="312"/>
        <end position="315"/>
    </location>
</feature>
<feature type="helix" evidence="10">
    <location>
        <begin position="324"/>
        <end position="335"/>
    </location>
</feature>
<feature type="strand" evidence="10">
    <location>
        <begin position="339"/>
        <end position="346"/>
    </location>
</feature>
<feature type="helix" evidence="10">
    <location>
        <begin position="350"/>
        <end position="352"/>
    </location>
</feature>
<feature type="strand" evidence="7">
    <location>
        <begin position="358"/>
        <end position="360"/>
    </location>
</feature>
<feature type="helix" evidence="10">
    <location>
        <begin position="364"/>
        <end position="378"/>
    </location>
</feature>
<feature type="turn" evidence="10">
    <location>
        <begin position="379"/>
        <end position="382"/>
    </location>
</feature>
<feature type="strand" evidence="10">
    <location>
        <begin position="384"/>
        <end position="390"/>
    </location>
</feature>
<feature type="helix" evidence="10">
    <location>
        <begin position="396"/>
        <end position="398"/>
    </location>
</feature>
<feature type="helix" evidence="10">
    <location>
        <begin position="413"/>
        <end position="418"/>
    </location>
</feature>
<feature type="helix" evidence="10">
    <location>
        <begin position="422"/>
        <end position="434"/>
    </location>
</feature>
<feature type="strand" evidence="10">
    <location>
        <begin position="438"/>
        <end position="446"/>
    </location>
</feature>
<feature type="helix" evidence="10">
    <location>
        <begin position="452"/>
        <end position="466"/>
    </location>
</feature>
<feature type="strand" evidence="10">
    <location>
        <begin position="473"/>
        <end position="476"/>
    </location>
</feature>
<feature type="strand" evidence="10">
    <location>
        <begin position="479"/>
        <end position="485"/>
    </location>
</feature>
<feature type="helix" evidence="10">
    <location>
        <begin position="487"/>
        <end position="498"/>
    </location>
</feature>
<feature type="strand" evidence="10">
    <location>
        <begin position="505"/>
        <end position="515"/>
    </location>
</feature>
<feature type="helix" evidence="11">
    <location>
        <begin position="518"/>
        <end position="520"/>
    </location>
</feature>
<feature type="strand" evidence="10">
    <location>
        <begin position="523"/>
        <end position="525"/>
    </location>
</feature>
<feature type="helix" evidence="10">
    <location>
        <begin position="530"/>
        <end position="533"/>
    </location>
</feature>
<feature type="helix" evidence="10">
    <location>
        <begin position="538"/>
        <end position="557"/>
    </location>
</feature>
<feature type="helix" evidence="9">
    <location>
        <begin position="560"/>
        <end position="562"/>
    </location>
</feature>
<feature type="strand" evidence="10">
    <location>
        <begin position="563"/>
        <end position="569"/>
    </location>
</feature>
<feature type="helix" evidence="10">
    <location>
        <begin position="573"/>
        <end position="575"/>
    </location>
</feature>
<feature type="strand" evidence="10">
    <location>
        <begin position="579"/>
        <end position="581"/>
    </location>
</feature>
<feature type="strand" evidence="10">
    <location>
        <begin position="589"/>
        <end position="591"/>
    </location>
</feature>
<feature type="helix" evidence="10">
    <location>
        <begin position="599"/>
        <end position="609"/>
    </location>
</feature>
<gene>
    <name type="primary">xynA</name>
    <name type="synonym">xyn10A</name>
    <name type="ordered locus">CJA_2471</name>
</gene>
<comment type="catalytic activity">
    <reaction>
        <text>Endohydrolysis of (1-&gt;4)-beta-D-xylosidic linkages in xylans.</text>
        <dbReference type="EC" id="3.2.1.8"/>
    </reaction>
</comment>
<comment type="pathway">
    <text>Glycan degradation; xylan degradation.</text>
</comment>
<comment type="similarity">
    <text evidence="6">Belongs to the glycosyl hydrolase 10 (cellulase F) family.</text>
</comment>
<keyword id="KW-0002">3D-structure</keyword>
<keyword id="KW-0119">Carbohydrate metabolism</keyword>
<keyword id="KW-0903">Direct protein sequencing</keyword>
<keyword id="KW-1015">Disulfide bond</keyword>
<keyword id="KW-0326">Glycosidase</keyword>
<keyword id="KW-0378">Hydrolase</keyword>
<keyword id="KW-0624">Polysaccharide degradation</keyword>
<keyword id="KW-1185">Reference proteome</keyword>
<keyword id="KW-0732">Signal</keyword>
<keyword id="KW-0858">Xylan degradation</keyword>
<evidence type="ECO:0000250" key="1"/>
<evidence type="ECO:0000255" key="2">
    <source>
        <dbReference type="PROSITE-ProRule" id="PRU01096"/>
    </source>
</evidence>
<evidence type="ECO:0000255" key="3">
    <source>
        <dbReference type="PROSITE-ProRule" id="PRU01099"/>
    </source>
</evidence>
<evidence type="ECO:0000255" key="4">
    <source>
        <dbReference type="PROSITE-ProRule" id="PRU01135"/>
    </source>
</evidence>
<evidence type="ECO:0000269" key="5">
    <source>
    </source>
</evidence>
<evidence type="ECO:0000305" key="6"/>
<evidence type="ECO:0007829" key="7">
    <source>
        <dbReference type="PDB" id="1CLX"/>
    </source>
</evidence>
<evidence type="ECO:0007829" key="8">
    <source>
        <dbReference type="PDB" id="1E8R"/>
    </source>
</evidence>
<evidence type="ECO:0007829" key="9">
    <source>
        <dbReference type="PDB" id="1W2V"/>
    </source>
</evidence>
<evidence type="ECO:0007829" key="10">
    <source>
        <dbReference type="PDB" id="1W32"/>
    </source>
</evidence>
<evidence type="ECO:0007829" key="11">
    <source>
        <dbReference type="PDB" id="1W3H"/>
    </source>
</evidence>
<accession>P14768</accession>
<accession>B3PKK3</accession>
<name>XYNA_CELJU</name>
<sequence>MRTAMAKSLGAAAFLGAALFAHTLAAQTATCSYNITNEWNTGYTGDITITNRGSSAINGWSVNWQYATNRLSSSWNANVSGSNPYSASNLSWNGNIQPGQSVSFGFQVNKNGGSAERPSVGGSICSGSVASSSAPASSVPSSIASSSPSSVASSVISSMASSSPVSSSSVASSTPGSSSGNQQCNWYGTLYPLCVTTTNGWGWEDQRSCIARSTCAAQPAPFGIVGSGSSTPVSSSSSSLSSSSVVSSIRSSSSSSSSSVATGNGLASLADFPIGVAVAASGGNADIFTSSARQNIVRAEFNQITAENIMKMSYMYSGSNFSFTNSDRLVSWAAQNGQTVHGHALVWHPSYQLPNWASDSNANFRQDFARHIDTVAAHFAGQVKSWDVVNEALFDSADDPDGRGSANGYRQSVFYRQFGGPEYIDEAFRRARAADPTAELYYNDFNTEENGAKTTALVNLVQRLLNNGVPIDGVGFQMHVMNDYPSIANIRQAMQKIVALSPTLKIKITELDVRLNNPYDGNSSNDYTNRNDCAVSCAGLDRQKARYKEIVQAYLEVVPPGRRGGITVWGIADPDSWLYTHQNLPDWPLLFNDNLQPKPAYQGVVEALSGR</sequence>